<name>PPZ1_METMF</name>
<gene>
    <name evidence="6" type="primary">ppz1</name>
</gene>
<reference key="1">
    <citation type="journal article" date="2019" name="Environ. Microbiol.">
        <title>Orthologous peramine and pyrrolopyrazine-producing biosynthetic gene clusters in Metarhizium rileyi, Metarhizium majus and Cladonia grayi.</title>
        <authorList>
            <person name="Berry D."/>
            <person name="Mace W."/>
            <person name="Rehner S.A."/>
            <person name="Grage K."/>
            <person name="Dijkwel P.P."/>
            <person name="Young C.A."/>
            <person name="Scott B."/>
        </authorList>
    </citation>
    <scope>NUCLEOTIDE SEQUENCE [GENOMIC DNA]</scope>
    <scope>FUNCTION</scope>
    <scope>PATHWAY</scope>
    <source>
        <strain>ARSEF 297</strain>
    </source>
</reference>
<reference key="2">
    <citation type="journal article" date="2024" name="J. Am. Chem. Soc.">
        <title>Two Iron(II), alpha-Ketoglutarate-Dependent Enzymes Encoded by the PPZ Gene Cluster of Metarhizium majus Enable Production of 8-Hydroxyperamine.</title>
        <authorList>
            <person name="Rothchild K.W."/>
            <person name="Hagar M."/>
            <person name="Berry D."/>
            <person name="Ryan K.S."/>
        </authorList>
    </citation>
    <scope>FUNCTION</scope>
    <scope>PATHWAY</scope>
</reference>
<feature type="chain" id="PRO_0000461617" description="Sulfatase ppz1">
    <location>
        <begin position="1"/>
        <end position="424"/>
    </location>
</feature>
<feature type="binding site" evidence="1">
    <location>
        <position position="13"/>
    </location>
    <ligand>
        <name>Ca(2+)</name>
        <dbReference type="ChEBI" id="CHEBI:29108"/>
    </ligand>
</feature>
<feature type="binding site" evidence="1">
    <location>
        <position position="203"/>
    </location>
    <ligand>
        <name>Ca(2+)</name>
        <dbReference type="ChEBI" id="CHEBI:29108"/>
    </ligand>
</feature>
<feature type="binding site" evidence="1">
    <location>
        <position position="204"/>
    </location>
    <ligand>
        <name>Ca(2+)</name>
        <dbReference type="ChEBI" id="CHEBI:29108"/>
    </ligand>
</feature>
<proteinExistence type="inferred from homology"/>
<sequence>MTDDQDVHLNSLDFQPISLLSFEGVAPYGPSCAQHKCHRCGPVLIDPGTCVYNNASMVLDNGAWAFHPGSYSTDLVANRSVEFLGDAIKAGEPFFLGVTPIAPHAETVGDAFEAPVPAKRHENLFLDVKVPRSPSFNAGAAGAVGYFRNLPKLAHDQIDYMDTFYRRRLQSLQAVDDLIEDIMAKLESHPDVLANTYLFYTSDNGYHIGQHRLPPGKTCGIEEDVNIPFIARGPGIAAGHVGRFPTSHTDLVPTIFELAGIPLRDEFDGEPMPLKGQRQSNDALNRNTYKTLRVDTDDYAFMYTVWCTNEHELYDMKMNNLYGSNSTTSSFDIPQLSARLDTLLLTLKACKGIACRRPWQTLFPTGNVNGLVDAMDPLHDSFFLVSQPRVTFTTCSLGYNAEVEGPLSPVIFGAADETAIEPRQ</sequence>
<comment type="function">
    <text evidence="2 3 4">Sulfatase; part of the gene cluster that mediates the biosynthesis of pyrrolopyrazines, secondary metabolites showing insecticidal activity (PubMed:30452111, PubMed:38578094). The role of ppz1 within the pathway has still to be determined (PubMed:38578094). The single multifunctional NRPS ppzA is sufficient to produce peramine via condensation of 1-pyrroline-5-carboxylate and arginine, N-methylation of the alpha-amino group of arginine and reduction of the thioester and the cyclization to form an iminium ion resulting in release from the peptide synthetase. Deprotonation of this intermediate and oxidation of the pyrroline ring would give rise to peramine (By similarity). In Epichloe species that produce only peramine, the peramine synthetase gene is not localized in a gene cluster, in contrast to Metarhizium species that contain additional pyrrolopyrazine biosynthesis genes. The 2-oxoglutarate-Fe(II) type oxidoreductase ppzC hydroxylates peramine to yield the newly identified compound 8-hydroxyperamine whereas ppzD converts L-proline into trans-4-hydroxy-L-proline, a precursor of peramine biosynthesis (PubMed:38578094).</text>
</comment>
<comment type="cofactor">
    <cofactor evidence="1">
        <name>Ca(2+)</name>
        <dbReference type="ChEBI" id="CHEBI:29108"/>
    </cofactor>
    <text evidence="1">Binds 1 Ca(2+) ion per subunit.</text>
</comment>
<comment type="similarity">
    <text evidence="7">Belongs to the sulfatase family.</text>
</comment>
<keyword id="KW-0106">Calcium</keyword>
<keyword id="KW-0378">Hydrolase</keyword>
<keyword id="KW-0479">Metal-binding</keyword>
<dbReference type="EC" id="3.1.6.-" evidence="8"/>
<dbReference type="EMBL" id="BK010672">
    <property type="protein sequence ID" value="DAC76724.1"/>
    <property type="molecule type" value="Genomic_DNA"/>
</dbReference>
<dbReference type="GO" id="GO:0005539">
    <property type="term" value="F:glycosaminoglycan binding"/>
    <property type="evidence" value="ECO:0007669"/>
    <property type="project" value="TreeGrafter"/>
</dbReference>
<dbReference type="GO" id="GO:0046872">
    <property type="term" value="F:metal ion binding"/>
    <property type="evidence" value="ECO:0007669"/>
    <property type="project" value="UniProtKB-KW"/>
</dbReference>
<dbReference type="GO" id="GO:0008449">
    <property type="term" value="F:N-acetylglucosamine-6-sulfatase activity"/>
    <property type="evidence" value="ECO:0007669"/>
    <property type="project" value="TreeGrafter"/>
</dbReference>
<dbReference type="CDD" id="cd16147">
    <property type="entry name" value="G6S"/>
    <property type="match status" value="1"/>
</dbReference>
<dbReference type="Gene3D" id="3.40.720.10">
    <property type="entry name" value="Alkaline Phosphatase, subunit A"/>
    <property type="match status" value="1"/>
</dbReference>
<dbReference type="InterPro" id="IPR017850">
    <property type="entry name" value="Alkaline_phosphatase_core_sf"/>
</dbReference>
<dbReference type="InterPro" id="IPR000917">
    <property type="entry name" value="Sulfatase_N"/>
</dbReference>
<dbReference type="PANTHER" id="PTHR43108">
    <property type="entry name" value="N-ACETYLGLUCOSAMINE-6-SULFATASE FAMILY MEMBER"/>
    <property type="match status" value="1"/>
</dbReference>
<dbReference type="PANTHER" id="PTHR43108:SF8">
    <property type="entry name" value="SD21168P"/>
    <property type="match status" value="1"/>
</dbReference>
<dbReference type="Pfam" id="PF00884">
    <property type="entry name" value="Sulfatase"/>
    <property type="match status" value="1"/>
</dbReference>
<dbReference type="SUPFAM" id="SSF53649">
    <property type="entry name" value="Alkaline phosphatase-like"/>
    <property type="match status" value="1"/>
</dbReference>
<evidence type="ECO:0000250" key="1">
    <source>
        <dbReference type="UniProtKB" id="P15289"/>
    </source>
</evidence>
<evidence type="ECO:0000250" key="2">
    <source>
        <dbReference type="UniProtKB" id="Q4H424"/>
    </source>
</evidence>
<evidence type="ECO:0000269" key="3">
    <source>
    </source>
</evidence>
<evidence type="ECO:0000269" key="4">
    <source>
    </source>
</evidence>
<evidence type="ECO:0000303" key="5">
    <source>
    </source>
</evidence>
<evidence type="ECO:0000303" key="6">
    <source>
    </source>
</evidence>
<evidence type="ECO:0000305" key="7"/>
<evidence type="ECO:0000305" key="8">
    <source>
    </source>
</evidence>
<protein>
    <recommendedName>
        <fullName evidence="6">Sulfatase ppz1</fullName>
        <ecNumber evidence="8">3.1.6.-</ecNumber>
    </recommendedName>
    <alternativeName>
        <fullName evidence="5">Pyrrolopyrazine biosynthesis cluster protein 1</fullName>
    </alternativeName>
</protein>
<organism>
    <name type="scientific">Metarhizium majus (strain ARSEF 297)</name>
    <dbReference type="NCBI Taxonomy" id="1276143"/>
    <lineage>
        <taxon>Eukaryota</taxon>
        <taxon>Fungi</taxon>
        <taxon>Dikarya</taxon>
        <taxon>Ascomycota</taxon>
        <taxon>Pezizomycotina</taxon>
        <taxon>Sordariomycetes</taxon>
        <taxon>Hypocreomycetidae</taxon>
        <taxon>Hypocreales</taxon>
        <taxon>Clavicipitaceae</taxon>
        <taxon>Metarhizium</taxon>
        <taxon>Metarhizium majus</taxon>
    </lineage>
</organism>
<accession>A0A455ZJM4</accession>